<name>ATPB_SORC5</name>
<comment type="function">
    <text evidence="1">Produces ATP from ADP in the presence of a proton gradient across the membrane. The catalytic sites are hosted primarily by the beta subunits.</text>
</comment>
<comment type="catalytic activity">
    <reaction evidence="1">
        <text>ATP + H2O + 4 H(+)(in) = ADP + phosphate + 5 H(+)(out)</text>
        <dbReference type="Rhea" id="RHEA:57720"/>
        <dbReference type="ChEBI" id="CHEBI:15377"/>
        <dbReference type="ChEBI" id="CHEBI:15378"/>
        <dbReference type="ChEBI" id="CHEBI:30616"/>
        <dbReference type="ChEBI" id="CHEBI:43474"/>
        <dbReference type="ChEBI" id="CHEBI:456216"/>
        <dbReference type="EC" id="7.1.2.2"/>
    </reaction>
</comment>
<comment type="subunit">
    <text evidence="1">F-type ATPases have 2 components, CF(1) - the catalytic core - and CF(0) - the membrane proton channel. CF(1) has five subunits: alpha(3), beta(3), gamma(1), delta(1), epsilon(1). CF(0) has three main subunits: a(1), b(2) and c(9-12). The alpha and beta chains form an alternating ring which encloses part of the gamma chain. CF(1) is attached to CF(0) by a central stalk formed by the gamma and epsilon chains, while a peripheral stalk is formed by the delta and b chains.</text>
</comment>
<comment type="subcellular location">
    <subcellularLocation>
        <location evidence="1">Cell inner membrane</location>
        <topology evidence="1">Peripheral membrane protein</topology>
    </subcellularLocation>
</comment>
<comment type="similarity">
    <text evidence="1">Belongs to the ATPase alpha/beta chains family.</text>
</comment>
<gene>
    <name evidence="1" type="primary">atpD</name>
    <name type="ordered locus">sce4444</name>
</gene>
<dbReference type="EC" id="7.1.2.2" evidence="1"/>
<dbReference type="EMBL" id="AM746676">
    <property type="protein sequence ID" value="CAN94607.1"/>
    <property type="molecule type" value="Genomic_DNA"/>
</dbReference>
<dbReference type="RefSeq" id="WP_012237076.1">
    <property type="nucleotide sequence ID" value="NC_010162.1"/>
</dbReference>
<dbReference type="SMR" id="A9F3R4"/>
<dbReference type="STRING" id="448385.sce4444"/>
<dbReference type="KEGG" id="scl:sce4444"/>
<dbReference type="eggNOG" id="COG0055">
    <property type="taxonomic scope" value="Bacteria"/>
</dbReference>
<dbReference type="HOGENOM" id="CLU_022398_0_2_7"/>
<dbReference type="OrthoDB" id="9801639at2"/>
<dbReference type="BioCyc" id="SCEL448385:SCE_RS22805-MONOMER"/>
<dbReference type="Proteomes" id="UP000002139">
    <property type="component" value="Chromosome"/>
</dbReference>
<dbReference type="GO" id="GO:0005886">
    <property type="term" value="C:plasma membrane"/>
    <property type="evidence" value="ECO:0007669"/>
    <property type="project" value="UniProtKB-SubCell"/>
</dbReference>
<dbReference type="GO" id="GO:0045259">
    <property type="term" value="C:proton-transporting ATP synthase complex"/>
    <property type="evidence" value="ECO:0007669"/>
    <property type="project" value="UniProtKB-KW"/>
</dbReference>
<dbReference type="GO" id="GO:0005524">
    <property type="term" value="F:ATP binding"/>
    <property type="evidence" value="ECO:0007669"/>
    <property type="project" value="UniProtKB-UniRule"/>
</dbReference>
<dbReference type="GO" id="GO:0016887">
    <property type="term" value="F:ATP hydrolysis activity"/>
    <property type="evidence" value="ECO:0007669"/>
    <property type="project" value="InterPro"/>
</dbReference>
<dbReference type="GO" id="GO:0046933">
    <property type="term" value="F:proton-transporting ATP synthase activity, rotational mechanism"/>
    <property type="evidence" value="ECO:0007669"/>
    <property type="project" value="UniProtKB-UniRule"/>
</dbReference>
<dbReference type="CDD" id="cd18110">
    <property type="entry name" value="ATP-synt_F1_beta_C"/>
    <property type="match status" value="1"/>
</dbReference>
<dbReference type="CDD" id="cd18115">
    <property type="entry name" value="ATP-synt_F1_beta_N"/>
    <property type="match status" value="1"/>
</dbReference>
<dbReference type="CDD" id="cd01133">
    <property type="entry name" value="F1-ATPase_beta_CD"/>
    <property type="match status" value="1"/>
</dbReference>
<dbReference type="FunFam" id="1.10.1140.10:FF:000001">
    <property type="entry name" value="ATP synthase subunit beta"/>
    <property type="match status" value="1"/>
</dbReference>
<dbReference type="FunFam" id="2.40.10.170:FF:000005">
    <property type="entry name" value="ATP synthase subunit beta"/>
    <property type="match status" value="1"/>
</dbReference>
<dbReference type="FunFam" id="3.40.50.300:FF:000026">
    <property type="entry name" value="ATP synthase subunit beta"/>
    <property type="match status" value="1"/>
</dbReference>
<dbReference type="Gene3D" id="2.40.10.170">
    <property type="match status" value="1"/>
</dbReference>
<dbReference type="Gene3D" id="1.10.1140.10">
    <property type="entry name" value="Bovine Mitochondrial F1-atpase, Atp Synthase Beta Chain, Chain D, domain 3"/>
    <property type="match status" value="1"/>
</dbReference>
<dbReference type="Gene3D" id="3.40.50.300">
    <property type="entry name" value="P-loop containing nucleotide triphosphate hydrolases"/>
    <property type="match status" value="1"/>
</dbReference>
<dbReference type="HAMAP" id="MF_01347">
    <property type="entry name" value="ATP_synth_beta_bact"/>
    <property type="match status" value="1"/>
</dbReference>
<dbReference type="InterPro" id="IPR003593">
    <property type="entry name" value="AAA+_ATPase"/>
</dbReference>
<dbReference type="InterPro" id="IPR055190">
    <property type="entry name" value="ATP-synt_VA_C"/>
</dbReference>
<dbReference type="InterPro" id="IPR005722">
    <property type="entry name" value="ATP_synth_F1_bsu"/>
</dbReference>
<dbReference type="InterPro" id="IPR020003">
    <property type="entry name" value="ATPase_a/bsu_AS"/>
</dbReference>
<dbReference type="InterPro" id="IPR050053">
    <property type="entry name" value="ATPase_alpha/beta_chains"/>
</dbReference>
<dbReference type="InterPro" id="IPR004100">
    <property type="entry name" value="ATPase_F1/V1/A1_a/bsu_N"/>
</dbReference>
<dbReference type="InterPro" id="IPR036121">
    <property type="entry name" value="ATPase_F1/V1/A1_a/bsu_N_sf"/>
</dbReference>
<dbReference type="InterPro" id="IPR000194">
    <property type="entry name" value="ATPase_F1/V1/A1_a/bsu_nucl-bd"/>
</dbReference>
<dbReference type="InterPro" id="IPR024034">
    <property type="entry name" value="ATPase_F1/V1_b/a_C"/>
</dbReference>
<dbReference type="InterPro" id="IPR027417">
    <property type="entry name" value="P-loop_NTPase"/>
</dbReference>
<dbReference type="NCBIfam" id="TIGR01039">
    <property type="entry name" value="atpD"/>
    <property type="match status" value="1"/>
</dbReference>
<dbReference type="PANTHER" id="PTHR15184">
    <property type="entry name" value="ATP SYNTHASE"/>
    <property type="match status" value="1"/>
</dbReference>
<dbReference type="PANTHER" id="PTHR15184:SF71">
    <property type="entry name" value="ATP SYNTHASE SUBUNIT BETA, MITOCHONDRIAL"/>
    <property type="match status" value="1"/>
</dbReference>
<dbReference type="Pfam" id="PF00006">
    <property type="entry name" value="ATP-synt_ab"/>
    <property type="match status" value="1"/>
</dbReference>
<dbReference type="Pfam" id="PF02874">
    <property type="entry name" value="ATP-synt_ab_N"/>
    <property type="match status" value="1"/>
</dbReference>
<dbReference type="Pfam" id="PF22919">
    <property type="entry name" value="ATP-synt_VA_C"/>
    <property type="match status" value="1"/>
</dbReference>
<dbReference type="PIRSF" id="PIRSF039072">
    <property type="entry name" value="ATPase_subunit_beta"/>
    <property type="match status" value="1"/>
</dbReference>
<dbReference type="SMART" id="SM00382">
    <property type="entry name" value="AAA"/>
    <property type="match status" value="1"/>
</dbReference>
<dbReference type="SUPFAM" id="SSF47917">
    <property type="entry name" value="C-terminal domain of alpha and beta subunits of F1 ATP synthase"/>
    <property type="match status" value="1"/>
</dbReference>
<dbReference type="SUPFAM" id="SSF50615">
    <property type="entry name" value="N-terminal domain of alpha and beta subunits of F1 ATP synthase"/>
    <property type="match status" value="1"/>
</dbReference>
<dbReference type="SUPFAM" id="SSF52540">
    <property type="entry name" value="P-loop containing nucleoside triphosphate hydrolases"/>
    <property type="match status" value="1"/>
</dbReference>
<dbReference type="PROSITE" id="PS00152">
    <property type="entry name" value="ATPASE_ALPHA_BETA"/>
    <property type="match status" value="1"/>
</dbReference>
<keyword id="KW-0066">ATP synthesis</keyword>
<keyword id="KW-0067">ATP-binding</keyword>
<keyword id="KW-0997">Cell inner membrane</keyword>
<keyword id="KW-1003">Cell membrane</keyword>
<keyword id="KW-0139">CF(1)</keyword>
<keyword id="KW-0375">Hydrogen ion transport</keyword>
<keyword id="KW-0406">Ion transport</keyword>
<keyword id="KW-0472">Membrane</keyword>
<keyword id="KW-0547">Nucleotide-binding</keyword>
<keyword id="KW-1185">Reference proteome</keyword>
<keyword id="KW-1278">Translocase</keyword>
<keyword id="KW-0813">Transport</keyword>
<organism>
    <name type="scientific">Sorangium cellulosum (strain So ce56)</name>
    <name type="common">Polyangium cellulosum (strain So ce56)</name>
    <dbReference type="NCBI Taxonomy" id="448385"/>
    <lineage>
        <taxon>Bacteria</taxon>
        <taxon>Pseudomonadati</taxon>
        <taxon>Myxococcota</taxon>
        <taxon>Polyangia</taxon>
        <taxon>Polyangiales</taxon>
        <taxon>Polyangiaceae</taxon>
        <taxon>Sorangium</taxon>
    </lineage>
</organism>
<evidence type="ECO:0000255" key="1">
    <source>
        <dbReference type="HAMAP-Rule" id="MF_01347"/>
    </source>
</evidence>
<reference key="1">
    <citation type="journal article" date="2007" name="Nat. Biotechnol.">
        <title>Complete genome sequence of the myxobacterium Sorangium cellulosum.</title>
        <authorList>
            <person name="Schneiker S."/>
            <person name="Perlova O."/>
            <person name="Kaiser O."/>
            <person name="Gerth K."/>
            <person name="Alici A."/>
            <person name="Altmeyer M.O."/>
            <person name="Bartels D."/>
            <person name="Bekel T."/>
            <person name="Beyer S."/>
            <person name="Bode E."/>
            <person name="Bode H.B."/>
            <person name="Bolten C.J."/>
            <person name="Choudhuri J.V."/>
            <person name="Doss S."/>
            <person name="Elnakady Y.A."/>
            <person name="Frank B."/>
            <person name="Gaigalat L."/>
            <person name="Goesmann A."/>
            <person name="Groeger C."/>
            <person name="Gross F."/>
            <person name="Jelsbak L."/>
            <person name="Jelsbak L."/>
            <person name="Kalinowski J."/>
            <person name="Kegler C."/>
            <person name="Knauber T."/>
            <person name="Konietzny S."/>
            <person name="Kopp M."/>
            <person name="Krause L."/>
            <person name="Krug D."/>
            <person name="Linke B."/>
            <person name="Mahmud T."/>
            <person name="Martinez-Arias R."/>
            <person name="McHardy A.C."/>
            <person name="Merai M."/>
            <person name="Meyer F."/>
            <person name="Mormann S."/>
            <person name="Munoz-Dorado J."/>
            <person name="Perez J."/>
            <person name="Pradella S."/>
            <person name="Rachid S."/>
            <person name="Raddatz G."/>
            <person name="Rosenau F."/>
            <person name="Rueckert C."/>
            <person name="Sasse F."/>
            <person name="Scharfe M."/>
            <person name="Schuster S.C."/>
            <person name="Suen G."/>
            <person name="Treuner-Lange A."/>
            <person name="Velicer G.J."/>
            <person name="Vorholter F.-J."/>
            <person name="Weissman K.J."/>
            <person name="Welch R.D."/>
            <person name="Wenzel S.C."/>
            <person name="Whitworth D.E."/>
            <person name="Wilhelm S."/>
            <person name="Wittmann C."/>
            <person name="Bloecker H."/>
            <person name="Puehler A."/>
            <person name="Mueller R."/>
        </authorList>
    </citation>
    <scope>NUCLEOTIDE SEQUENCE [LARGE SCALE GENOMIC DNA]</scope>
    <source>
        <strain>So ce56</strain>
    </source>
</reference>
<sequence length="474" mass="50723">MVVGKITQVIGPVVDVDFPAGQLPKILNALKLSNPSISAEPDNLVLEVAQHLGESSVRTIAMDSTDGLVRGMEVRDTGKPIMVPVGNECLGRILNVVGVPIDEAGPVHAKKVAPIHREPPPFIEQSTKVEVFETGIKVIDLIAPYRKGGKIGLFGGAGVGKTVLILELINNVAKAHGGVSVFAGVGERTREGNDLFLEMSESKLADGSPVISKAALIYGQMNEPPGARSRVALSALAVAEHFRDEEGQDVLLFVDNIFRFTQAGSEVSALLGRIPSAVGYQPTLSTEMGAFQERITSTTKGSVTSVQAIYVPADDLTDPAPATAFAHLDATTVLSRAISELGIYPAVDPLDSNSTMLDPQIVGEKHYSVARRVQQTLQRYKDLQDIIAILGMDELSEDDKLVVARARKIQKFLSQPFFVAAQFTGLEGKLVPLKDTIAGFEEILDGKLDHVAEQDFYLVGGIEDVKAKASQRAS</sequence>
<proteinExistence type="inferred from homology"/>
<feature type="chain" id="PRO_1000086926" description="ATP synthase subunit beta">
    <location>
        <begin position="1"/>
        <end position="474"/>
    </location>
</feature>
<feature type="binding site" evidence="1">
    <location>
        <begin position="155"/>
        <end position="162"/>
    </location>
    <ligand>
        <name>ATP</name>
        <dbReference type="ChEBI" id="CHEBI:30616"/>
    </ligand>
</feature>
<protein>
    <recommendedName>
        <fullName evidence="1">ATP synthase subunit beta</fullName>
        <ecNumber evidence="1">7.1.2.2</ecNumber>
    </recommendedName>
    <alternativeName>
        <fullName evidence="1">ATP synthase F1 sector subunit beta</fullName>
    </alternativeName>
    <alternativeName>
        <fullName evidence="1">F-ATPase subunit beta</fullName>
    </alternativeName>
</protein>
<accession>A9F3R4</accession>